<keyword id="KW-0002">3D-structure</keyword>
<keyword id="KW-1064">Adaptive immunity</keyword>
<keyword id="KW-0025">Alternative splicing</keyword>
<keyword id="KW-1003">Cell membrane</keyword>
<keyword id="KW-0945">Host-virus interaction</keyword>
<keyword id="KW-0391">Immunity</keyword>
<keyword id="KW-0472">Membrane</keyword>
<keyword id="KW-0597">Phosphoprotein</keyword>
<keyword id="KW-1267">Proteomics identification</keyword>
<keyword id="KW-0675">Receptor</keyword>
<keyword id="KW-1185">Reference proteome</keyword>
<keyword id="KW-0677">Repeat</keyword>
<keyword id="KW-0732">Signal</keyword>
<keyword id="KW-0812">Transmembrane</keyword>
<keyword id="KW-1133">Transmembrane helix</keyword>
<evidence type="ECO:0000250" key="1">
    <source>
        <dbReference type="UniProtKB" id="P24161"/>
    </source>
</evidence>
<evidence type="ECO:0000255" key="2"/>
<evidence type="ECO:0000255" key="3">
    <source>
        <dbReference type="PROSITE-ProRule" id="PRU00379"/>
    </source>
</evidence>
<evidence type="ECO:0000256" key="4">
    <source>
        <dbReference type="SAM" id="MobiDB-lite"/>
    </source>
</evidence>
<evidence type="ECO:0000269" key="5">
    <source>
    </source>
</evidence>
<evidence type="ECO:0000269" key="6">
    <source>
    </source>
</evidence>
<evidence type="ECO:0000269" key="7">
    <source>
    </source>
</evidence>
<evidence type="ECO:0000269" key="8">
    <source>
    </source>
</evidence>
<evidence type="ECO:0000269" key="9">
    <source>
    </source>
</evidence>
<evidence type="ECO:0000269" key="10">
    <source>
    </source>
</evidence>
<evidence type="ECO:0000269" key="11">
    <source>
    </source>
</evidence>
<evidence type="ECO:0000269" key="12">
    <source>
    </source>
</evidence>
<evidence type="ECO:0000269" key="13">
    <source>
    </source>
</evidence>
<evidence type="ECO:0000269" key="14">
    <source>
    </source>
</evidence>
<evidence type="ECO:0000269" key="15">
    <source>
    </source>
</evidence>
<evidence type="ECO:0000269" key="16">
    <source>
    </source>
</evidence>
<evidence type="ECO:0000269" key="17">
    <source>
    </source>
</evidence>
<evidence type="ECO:0000269" key="18">
    <source>
    </source>
</evidence>
<evidence type="ECO:0000269" key="19">
    <source>
    </source>
</evidence>
<evidence type="ECO:0000269" key="20">
    <source>
    </source>
</evidence>
<evidence type="ECO:0000269" key="21">
    <source>
    </source>
</evidence>
<evidence type="ECO:0000269" key="22">
    <source>
    </source>
</evidence>
<evidence type="ECO:0000269" key="23">
    <source>
    </source>
</evidence>
<evidence type="ECO:0000269" key="24">
    <source>
    </source>
</evidence>
<evidence type="ECO:0000269" key="25">
    <source>
    </source>
</evidence>
<evidence type="ECO:0000269" key="26">
    <source>
    </source>
</evidence>
<evidence type="ECO:0000269" key="27">
    <source>
    </source>
</evidence>
<evidence type="ECO:0000269" key="28">
    <source>
    </source>
</evidence>
<evidence type="ECO:0000269" key="29">
    <source>
    </source>
</evidence>
<evidence type="ECO:0000303" key="30">
    <source>
    </source>
</evidence>
<evidence type="ECO:0000303" key="31">
    <source>
    </source>
</evidence>
<evidence type="ECO:0000305" key="32"/>
<evidence type="ECO:0007744" key="33">
    <source>
    </source>
</evidence>
<evidence type="ECO:0007744" key="34">
    <source>
    </source>
</evidence>
<evidence type="ECO:0007744" key="35">
    <source>
    </source>
</evidence>
<evidence type="ECO:0007744" key="36">
    <source>
    </source>
</evidence>
<evidence type="ECO:0007829" key="37">
    <source>
        <dbReference type="PDB" id="2OQ1"/>
    </source>
</evidence>
<evidence type="ECO:0007829" key="38">
    <source>
        <dbReference type="PDB" id="3IK5"/>
    </source>
</evidence>
<evidence type="ECO:0007829" key="39">
    <source>
        <dbReference type="PDB" id="7PHR"/>
    </source>
</evidence>
<evidence type="ECO:0007829" key="40">
    <source>
        <dbReference type="PDB" id="8ES8"/>
    </source>
</evidence>
<sequence length="164" mass="18696">MKWKALFTAAILQAQLPITEAQSFGLLDPKLCYLLDGILFIYGVILTALFLRVKFSRSADAPAYQQGQNQLYNELNLGRREEYDVLDKRRGRDPEMGGKPQRRKNPQEGLYNELQKDKMAEAYSEIGMKGERRRGKGHDGLYQGLSTATKDTYDALHMQALPPR</sequence>
<organism>
    <name type="scientific">Homo sapiens</name>
    <name type="common">Human</name>
    <dbReference type="NCBI Taxonomy" id="9606"/>
    <lineage>
        <taxon>Eukaryota</taxon>
        <taxon>Metazoa</taxon>
        <taxon>Chordata</taxon>
        <taxon>Craniata</taxon>
        <taxon>Vertebrata</taxon>
        <taxon>Euteleostomi</taxon>
        <taxon>Mammalia</taxon>
        <taxon>Eutheria</taxon>
        <taxon>Euarchontoglires</taxon>
        <taxon>Primates</taxon>
        <taxon>Haplorrhini</taxon>
        <taxon>Catarrhini</taxon>
        <taxon>Hominidae</taxon>
        <taxon>Homo</taxon>
    </lineage>
</organism>
<feature type="signal peptide">
    <location>
        <begin position="1"/>
        <end position="21"/>
    </location>
</feature>
<feature type="chain" id="PRO_0000016493" description="T-cell surface glycoprotein CD3 zeta chain">
    <location>
        <begin position="22"/>
        <end position="164"/>
    </location>
</feature>
<feature type="topological domain" description="Extracellular" evidence="2">
    <location>
        <begin position="22"/>
        <end position="30"/>
    </location>
</feature>
<feature type="transmembrane region" description="Helical" evidence="2">
    <location>
        <begin position="31"/>
        <end position="51"/>
    </location>
</feature>
<feature type="topological domain" description="Cytoplasmic" evidence="2">
    <location>
        <begin position="52"/>
        <end position="164"/>
    </location>
</feature>
<feature type="domain" description="ITAM 1" evidence="3">
    <location>
        <begin position="61"/>
        <end position="89"/>
    </location>
</feature>
<feature type="domain" description="ITAM 2" evidence="3">
    <location>
        <begin position="100"/>
        <end position="128"/>
    </location>
</feature>
<feature type="domain" description="ITAM 3" evidence="3">
    <location>
        <begin position="131"/>
        <end position="159"/>
    </location>
</feature>
<feature type="region of interest" description="Disordered" evidence="4">
    <location>
        <begin position="83"/>
        <end position="111"/>
    </location>
</feature>
<feature type="region of interest" description="Disordered" evidence="4">
    <location>
        <begin position="128"/>
        <end position="154"/>
    </location>
</feature>
<feature type="compositionally biased region" description="Basic and acidic residues" evidence="4">
    <location>
        <begin position="83"/>
        <end position="96"/>
    </location>
</feature>
<feature type="modified residue" description="Phosphoserine" evidence="34">
    <location>
        <position position="58"/>
    </location>
</feature>
<feature type="modified residue" description="Phosphotyrosine" evidence="34 35 36">
    <location>
        <position position="64"/>
    </location>
</feature>
<feature type="modified residue" description="Phosphotyrosine" evidence="34 35 36">
    <location>
        <position position="72"/>
    </location>
</feature>
<feature type="modified residue" description="Phosphotyrosine" evidence="33">
    <location>
        <position position="83"/>
    </location>
</feature>
<feature type="modified residue" description="Phosphotyrosine" evidence="33 34 35 36">
    <location>
        <position position="111"/>
    </location>
</feature>
<feature type="modified residue" description="Phosphotyrosine" evidence="36">
    <location>
        <position position="123"/>
    </location>
</feature>
<feature type="modified residue" description="Phosphotyrosine" evidence="33 34 35 36">
    <location>
        <position position="142"/>
    </location>
</feature>
<feature type="modified residue" description="Phosphotyrosine" evidence="36">
    <location>
        <position position="153"/>
    </location>
</feature>
<feature type="splice variant" id="VSP_036459" description="In isoform 3." evidence="30 31">
    <location>
        <position position="101"/>
    </location>
</feature>
<feature type="mutagenesis site" description="Decreases cell surface expression of IgG Fc receptor complex." evidence="18">
    <original>D</original>
    <variation>E</variation>
    <variation>L</variation>
    <variation>V</variation>
    <location>
        <position position="36"/>
    </location>
</feature>
<feature type="sequence conflict" description="In Ref. 1; AAA60394." evidence="32" ref="1">
    <original>DA</original>
    <variation>EP</variation>
    <location>
        <begin position="60"/>
        <end position="61"/>
    </location>
</feature>
<feature type="helix" evidence="39">
    <location>
        <begin position="25"/>
        <end position="27"/>
    </location>
</feature>
<feature type="helix" evidence="40">
    <location>
        <begin position="30"/>
        <end position="55"/>
    </location>
</feature>
<feature type="helix" evidence="38">
    <location>
        <begin position="64"/>
        <end position="73"/>
    </location>
</feature>
<feature type="turn" evidence="38">
    <location>
        <begin position="74"/>
        <end position="76"/>
    </location>
</feature>
<feature type="helix" evidence="37">
    <location>
        <begin position="77"/>
        <end position="79"/>
    </location>
</feature>
<gene>
    <name type="primary">CD247</name>
    <name type="synonym">CD3Z</name>
    <name type="synonym">T3Z</name>
    <name type="synonym">TCRZ</name>
</gene>
<protein>
    <recommendedName>
        <fullName>T-cell surface glycoprotein CD3 zeta chain</fullName>
    </recommendedName>
    <alternativeName>
        <fullName>T-cell receptor T3 zeta chain</fullName>
    </alternativeName>
    <cdAntigenName>CD247</cdAntigenName>
</protein>
<reference key="1">
    <citation type="journal article" date="1988" name="Proc. Natl. Acad. Sci. U.S.A.">
        <title>Molecular cloning and chromosomal localization of the human T-cell receptor zeta chain: distinction from the molecular CD3 complex.</title>
        <authorList>
            <person name="Weissman A.M."/>
            <person name="Hou D."/>
            <person name="Orloff D.G."/>
            <person name="Modi W.S."/>
            <person name="Seuanez H."/>
            <person name="O'Brien S.J."/>
            <person name="Klausner R.D."/>
        </authorList>
    </citation>
    <scope>NUCLEOTIDE SEQUENCE [MRNA] (ISOFORM 3)</scope>
</reference>
<reference key="2">
    <citation type="journal article" date="2004" name="Nat. Genet.">
        <title>Complete sequencing and characterization of 21,243 full-length human cDNAs.</title>
        <authorList>
            <person name="Ota T."/>
            <person name="Suzuki Y."/>
            <person name="Nishikawa T."/>
            <person name="Otsuki T."/>
            <person name="Sugiyama T."/>
            <person name="Irie R."/>
            <person name="Wakamatsu A."/>
            <person name="Hayashi K."/>
            <person name="Sato H."/>
            <person name="Nagai K."/>
            <person name="Kimura K."/>
            <person name="Makita H."/>
            <person name="Sekine M."/>
            <person name="Obayashi M."/>
            <person name="Nishi T."/>
            <person name="Shibahara T."/>
            <person name="Tanaka T."/>
            <person name="Ishii S."/>
            <person name="Yamamoto J."/>
            <person name="Saito K."/>
            <person name="Kawai Y."/>
            <person name="Isono Y."/>
            <person name="Nakamura Y."/>
            <person name="Nagahari K."/>
            <person name="Murakami K."/>
            <person name="Yasuda T."/>
            <person name="Iwayanagi T."/>
            <person name="Wagatsuma M."/>
            <person name="Shiratori A."/>
            <person name="Sudo H."/>
            <person name="Hosoiri T."/>
            <person name="Kaku Y."/>
            <person name="Kodaira H."/>
            <person name="Kondo H."/>
            <person name="Sugawara M."/>
            <person name="Takahashi M."/>
            <person name="Kanda K."/>
            <person name="Yokoi T."/>
            <person name="Furuya T."/>
            <person name="Kikkawa E."/>
            <person name="Omura Y."/>
            <person name="Abe K."/>
            <person name="Kamihara K."/>
            <person name="Katsuta N."/>
            <person name="Sato K."/>
            <person name="Tanikawa M."/>
            <person name="Yamazaki M."/>
            <person name="Ninomiya K."/>
            <person name="Ishibashi T."/>
            <person name="Yamashita H."/>
            <person name="Murakawa K."/>
            <person name="Fujimori K."/>
            <person name="Tanai H."/>
            <person name="Kimata M."/>
            <person name="Watanabe M."/>
            <person name="Hiraoka S."/>
            <person name="Chiba Y."/>
            <person name="Ishida S."/>
            <person name="Ono Y."/>
            <person name="Takiguchi S."/>
            <person name="Watanabe S."/>
            <person name="Yosida M."/>
            <person name="Hotuta T."/>
            <person name="Kusano J."/>
            <person name="Kanehori K."/>
            <person name="Takahashi-Fujii A."/>
            <person name="Hara H."/>
            <person name="Tanase T.-O."/>
            <person name="Nomura Y."/>
            <person name="Togiya S."/>
            <person name="Komai F."/>
            <person name="Hara R."/>
            <person name="Takeuchi K."/>
            <person name="Arita M."/>
            <person name="Imose N."/>
            <person name="Musashino K."/>
            <person name="Yuuki H."/>
            <person name="Oshima A."/>
            <person name="Sasaki N."/>
            <person name="Aotsuka S."/>
            <person name="Yoshikawa Y."/>
            <person name="Matsunawa H."/>
            <person name="Ichihara T."/>
            <person name="Shiohata N."/>
            <person name="Sano S."/>
            <person name="Moriya S."/>
            <person name="Momiyama H."/>
            <person name="Satoh N."/>
            <person name="Takami S."/>
            <person name="Terashima Y."/>
            <person name="Suzuki O."/>
            <person name="Nakagawa S."/>
            <person name="Senoh A."/>
            <person name="Mizoguchi H."/>
            <person name="Goto Y."/>
            <person name="Shimizu F."/>
            <person name="Wakebe H."/>
            <person name="Hishigaki H."/>
            <person name="Watanabe T."/>
            <person name="Sugiyama A."/>
            <person name="Takemoto M."/>
            <person name="Kawakami B."/>
            <person name="Yamazaki M."/>
            <person name="Watanabe K."/>
            <person name="Kumagai A."/>
            <person name="Itakura S."/>
            <person name="Fukuzumi Y."/>
            <person name="Fujimori Y."/>
            <person name="Komiyama M."/>
            <person name="Tashiro H."/>
            <person name="Tanigami A."/>
            <person name="Fujiwara T."/>
            <person name="Ono T."/>
            <person name="Yamada K."/>
            <person name="Fujii Y."/>
            <person name="Ozaki K."/>
            <person name="Hirao M."/>
            <person name="Ohmori Y."/>
            <person name="Kawabata A."/>
            <person name="Hikiji T."/>
            <person name="Kobatake N."/>
            <person name="Inagaki H."/>
            <person name="Ikema Y."/>
            <person name="Okamoto S."/>
            <person name="Okitani R."/>
            <person name="Kawakami T."/>
            <person name="Noguchi S."/>
            <person name="Itoh T."/>
            <person name="Shigeta K."/>
            <person name="Senba T."/>
            <person name="Matsumura K."/>
            <person name="Nakajima Y."/>
            <person name="Mizuno T."/>
            <person name="Morinaga M."/>
            <person name="Sasaki M."/>
            <person name="Togashi T."/>
            <person name="Oyama M."/>
            <person name="Hata H."/>
            <person name="Watanabe M."/>
            <person name="Komatsu T."/>
            <person name="Mizushima-Sugano J."/>
            <person name="Satoh T."/>
            <person name="Shirai Y."/>
            <person name="Takahashi Y."/>
            <person name="Nakagawa K."/>
            <person name="Okumura K."/>
            <person name="Nagase T."/>
            <person name="Nomura N."/>
            <person name="Kikuchi H."/>
            <person name="Masuho Y."/>
            <person name="Yamashita R."/>
            <person name="Nakai K."/>
            <person name="Yada T."/>
            <person name="Nakamura Y."/>
            <person name="Ohara O."/>
            <person name="Isogai T."/>
            <person name="Sugano S."/>
        </authorList>
    </citation>
    <scope>NUCLEOTIDE SEQUENCE [LARGE SCALE MRNA] (ISOFORM 3)</scope>
    <source>
        <tissue>Skeletal muscle</tissue>
    </source>
</reference>
<reference key="3">
    <citation type="submission" date="2005-05" db="EMBL/GenBank/DDBJ databases">
        <authorList>
            <consortium name="NIEHS SNPs program"/>
        </authorList>
    </citation>
    <scope>NUCLEOTIDE SEQUENCE [GENOMIC DNA]</scope>
</reference>
<reference key="4">
    <citation type="journal article" date="2006" name="Nature">
        <title>The DNA sequence and biological annotation of human chromosome 1.</title>
        <authorList>
            <person name="Gregory S.G."/>
            <person name="Barlow K.F."/>
            <person name="McLay K.E."/>
            <person name="Kaul R."/>
            <person name="Swarbreck D."/>
            <person name="Dunham A."/>
            <person name="Scott C.E."/>
            <person name="Howe K.L."/>
            <person name="Woodfine K."/>
            <person name="Spencer C.C.A."/>
            <person name="Jones M.C."/>
            <person name="Gillson C."/>
            <person name="Searle S."/>
            <person name="Zhou Y."/>
            <person name="Kokocinski F."/>
            <person name="McDonald L."/>
            <person name="Evans R."/>
            <person name="Phillips K."/>
            <person name="Atkinson A."/>
            <person name="Cooper R."/>
            <person name="Jones C."/>
            <person name="Hall R.E."/>
            <person name="Andrews T.D."/>
            <person name="Lloyd C."/>
            <person name="Ainscough R."/>
            <person name="Almeida J.P."/>
            <person name="Ambrose K.D."/>
            <person name="Anderson F."/>
            <person name="Andrew R.W."/>
            <person name="Ashwell R.I.S."/>
            <person name="Aubin K."/>
            <person name="Babbage A.K."/>
            <person name="Bagguley C.L."/>
            <person name="Bailey J."/>
            <person name="Beasley H."/>
            <person name="Bethel G."/>
            <person name="Bird C.P."/>
            <person name="Bray-Allen S."/>
            <person name="Brown J.Y."/>
            <person name="Brown A.J."/>
            <person name="Buckley D."/>
            <person name="Burton J."/>
            <person name="Bye J."/>
            <person name="Carder C."/>
            <person name="Chapman J.C."/>
            <person name="Clark S.Y."/>
            <person name="Clarke G."/>
            <person name="Clee C."/>
            <person name="Cobley V."/>
            <person name="Collier R.E."/>
            <person name="Corby N."/>
            <person name="Coville G.J."/>
            <person name="Davies J."/>
            <person name="Deadman R."/>
            <person name="Dunn M."/>
            <person name="Earthrowl M."/>
            <person name="Ellington A.G."/>
            <person name="Errington H."/>
            <person name="Frankish A."/>
            <person name="Frankland J."/>
            <person name="French L."/>
            <person name="Garner P."/>
            <person name="Garnett J."/>
            <person name="Gay L."/>
            <person name="Ghori M.R.J."/>
            <person name="Gibson R."/>
            <person name="Gilby L.M."/>
            <person name="Gillett W."/>
            <person name="Glithero R.J."/>
            <person name="Grafham D.V."/>
            <person name="Griffiths C."/>
            <person name="Griffiths-Jones S."/>
            <person name="Grocock R."/>
            <person name="Hammond S."/>
            <person name="Harrison E.S.I."/>
            <person name="Hart E."/>
            <person name="Haugen E."/>
            <person name="Heath P.D."/>
            <person name="Holmes S."/>
            <person name="Holt K."/>
            <person name="Howden P.J."/>
            <person name="Hunt A.R."/>
            <person name="Hunt S.E."/>
            <person name="Hunter G."/>
            <person name="Isherwood J."/>
            <person name="James R."/>
            <person name="Johnson C."/>
            <person name="Johnson D."/>
            <person name="Joy A."/>
            <person name="Kay M."/>
            <person name="Kershaw J.K."/>
            <person name="Kibukawa M."/>
            <person name="Kimberley A.M."/>
            <person name="King A."/>
            <person name="Knights A.J."/>
            <person name="Lad H."/>
            <person name="Laird G."/>
            <person name="Lawlor S."/>
            <person name="Leongamornlert D.A."/>
            <person name="Lloyd D.M."/>
            <person name="Loveland J."/>
            <person name="Lovell J."/>
            <person name="Lush M.J."/>
            <person name="Lyne R."/>
            <person name="Martin S."/>
            <person name="Mashreghi-Mohammadi M."/>
            <person name="Matthews L."/>
            <person name="Matthews N.S.W."/>
            <person name="McLaren S."/>
            <person name="Milne S."/>
            <person name="Mistry S."/>
            <person name="Moore M.J.F."/>
            <person name="Nickerson T."/>
            <person name="O'Dell C.N."/>
            <person name="Oliver K."/>
            <person name="Palmeiri A."/>
            <person name="Palmer S.A."/>
            <person name="Parker A."/>
            <person name="Patel D."/>
            <person name="Pearce A.V."/>
            <person name="Peck A.I."/>
            <person name="Pelan S."/>
            <person name="Phelps K."/>
            <person name="Phillimore B.J."/>
            <person name="Plumb R."/>
            <person name="Rajan J."/>
            <person name="Raymond C."/>
            <person name="Rouse G."/>
            <person name="Saenphimmachak C."/>
            <person name="Sehra H.K."/>
            <person name="Sheridan E."/>
            <person name="Shownkeen R."/>
            <person name="Sims S."/>
            <person name="Skuce C.D."/>
            <person name="Smith M."/>
            <person name="Steward C."/>
            <person name="Subramanian S."/>
            <person name="Sycamore N."/>
            <person name="Tracey A."/>
            <person name="Tromans A."/>
            <person name="Van Helmond Z."/>
            <person name="Wall M."/>
            <person name="Wallis J.M."/>
            <person name="White S."/>
            <person name="Whitehead S.L."/>
            <person name="Wilkinson J.E."/>
            <person name="Willey D.L."/>
            <person name="Williams H."/>
            <person name="Wilming L."/>
            <person name="Wray P.W."/>
            <person name="Wu Z."/>
            <person name="Coulson A."/>
            <person name="Vaudin M."/>
            <person name="Sulston J.E."/>
            <person name="Durbin R.M."/>
            <person name="Hubbard T."/>
            <person name="Wooster R."/>
            <person name="Dunham I."/>
            <person name="Carter N.P."/>
            <person name="McVean G."/>
            <person name="Ross M.T."/>
            <person name="Harrow J."/>
            <person name="Olson M.V."/>
            <person name="Beck S."/>
            <person name="Rogers J."/>
            <person name="Bentley D.R."/>
        </authorList>
    </citation>
    <scope>NUCLEOTIDE SEQUENCE [LARGE SCALE GENOMIC DNA]</scope>
</reference>
<reference key="5">
    <citation type="submission" date="2005-07" db="EMBL/GenBank/DDBJ databases">
        <authorList>
            <person name="Mural R.J."/>
            <person name="Istrail S."/>
            <person name="Sutton G.G."/>
            <person name="Florea L."/>
            <person name="Halpern A.L."/>
            <person name="Mobarry C.M."/>
            <person name="Lippert R."/>
            <person name="Walenz B."/>
            <person name="Shatkay H."/>
            <person name="Dew I."/>
            <person name="Miller J.R."/>
            <person name="Flanigan M.J."/>
            <person name="Edwards N.J."/>
            <person name="Bolanos R."/>
            <person name="Fasulo D."/>
            <person name="Halldorsson B.V."/>
            <person name="Hannenhalli S."/>
            <person name="Turner R."/>
            <person name="Yooseph S."/>
            <person name="Lu F."/>
            <person name="Nusskern D.R."/>
            <person name="Shue B.C."/>
            <person name="Zheng X.H."/>
            <person name="Zhong F."/>
            <person name="Delcher A.L."/>
            <person name="Huson D.H."/>
            <person name="Kravitz S.A."/>
            <person name="Mouchard L."/>
            <person name="Reinert K."/>
            <person name="Remington K.A."/>
            <person name="Clark A.G."/>
            <person name="Waterman M.S."/>
            <person name="Eichler E.E."/>
            <person name="Adams M.D."/>
            <person name="Hunkapiller M.W."/>
            <person name="Myers E.W."/>
            <person name="Venter J.C."/>
        </authorList>
    </citation>
    <scope>NUCLEOTIDE SEQUENCE [LARGE SCALE GENOMIC DNA]</scope>
</reference>
<reference key="6">
    <citation type="journal article" date="2004" name="Genome Res.">
        <title>The status, quality, and expansion of the NIH full-length cDNA project: the Mammalian Gene Collection (MGC).</title>
        <authorList>
            <consortium name="The MGC Project Team"/>
        </authorList>
    </citation>
    <scope>NUCLEOTIDE SEQUENCE [LARGE SCALE MRNA] (ISOFORM 1)</scope>
    <source>
        <tissue>Pancreas</tissue>
    </source>
</reference>
<reference key="7">
    <citation type="journal article" date="1989" name="Nature">
        <title>Co-association of CD3 zeta with a receptor (CD16) for IgG Fc on human natural killer cells.</title>
        <authorList>
            <person name="Lanier L.L."/>
            <person name="Yu G."/>
            <person name="Phillips J.H."/>
        </authorList>
    </citation>
    <scope>SUBUNIT</scope>
    <scope>INTERACTION WITH FCGR3A</scope>
</reference>
<reference key="8">
    <citation type="journal article" date="1989" name="Proc. Natl. Acad. Sci. U.S.A.">
        <title>The CD4 and CD8 antigens are coupled to a protein-tyrosine kinase (p56lck) that phosphorylates the CD3 complex.</title>
        <authorList>
            <person name="Barber E.K."/>
            <person name="Dasgupta J.D."/>
            <person name="Schlossman S.F."/>
            <person name="Trevillyan J.M."/>
            <person name="Rudd C.E."/>
        </authorList>
    </citation>
    <scope>FUNCTION</scope>
    <scope>PHOSPHORYLATION BY LCK</scope>
</reference>
<reference key="9">
    <citation type="journal article" date="1991" name="J. Immunol.">
        <title>Analysis of Fc gamma RIII (CD16) membrane expression and association with CD3 zeta and Fc epsilon RI-gamma by site-directed mutation.</title>
        <authorList>
            <person name="Lanier L.L."/>
            <person name="Yu G."/>
            <person name="Phillips J.H."/>
        </authorList>
    </citation>
    <scope>SUBUNIT</scope>
    <scope>INTERACTION WITH FCGR3A AND FCER1G</scope>
    <scope>MUTAGENESIS OF ASP-36</scope>
</reference>
<reference key="10">
    <citation type="journal article" date="1992" name="Eur. J. Immunol.">
        <title>Evidence for an association between the T cell receptor/CD3 antigen complex and the CD5 antigen in human T lymphocytes.</title>
        <authorList>
            <person name="Osman N."/>
            <person name="Ley S.C."/>
            <person name="Crumpton M.J."/>
        </authorList>
    </citation>
    <scope>FUNCTION</scope>
    <scope>INTERACTION WITH CD5</scope>
</reference>
<reference key="11">
    <citation type="journal article" date="1992" name="Proc. Natl. Acad. Sci. U.S.A.">
        <title>CD5 acts as a tyrosine kinase substrate within a receptor complex comprising T-cell receptor zeta chain/CD3 and protein-tyrosine kinases p56lck and p59fyn.</title>
        <authorList>
            <person name="Burgess K.E."/>
            <person name="Yamamoto M."/>
            <person name="Prasad K.V."/>
            <person name="Rudd C.E."/>
        </authorList>
    </citation>
    <scope>FUNCTION</scope>
    <scope>INTERACTION WITH CD5</scope>
</reference>
<reference key="12">
    <citation type="journal article" date="1994" name="Science">
        <title>Sequential interactions of the TCR with two distinct cytoplasmic tyrosine kinases.</title>
        <authorList>
            <person name="Iwashima M."/>
            <person name="Irving B.A."/>
            <person name="van Oers N.S."/>
            <person name="Chan A.C."/>
            <person name="Weiss A."/>
        </authorList>
    </citation>
    <scope>FUNCTION</scope>
    <scope>INTERACTION WITH ZAP70</scope>
</reference>
<reference key="13">
    <citation type="journal article" date="1998" name="J. Virol.">
        <title>Zeta chain of the T-cell receptor interacts with nef of simian immunodeficiency virus and human immunodeficiency virus type 2.</title>
        <authorList>
            <person name="Howe A.Y."/>
            <person name="Jung J.U."/>
            <person name="Desrosiers R.C."/>
        </authorList>
    </citation>
    <scope>INTERACTION WITH HIV-2 NEF (MICROBIAL INFECTION)</scope>
</reference>
<reference key="14">
    <citation type="journal article" date="1998" name="Oncogene">
        <title>Stimulation through the T cell receptor leads to interactions between SHB and several signaling proteins.</title>
        <authorList>
            <person name="Welsh M."/>
            <person name="Songyang Z."/>
            <person name="Frantz J.D."/>
            <person name="Trueb T."/>
            <person name="Reedquist K.A."/>
            <person name="Karlsson T."/>
            <person name="Miyazaki M."/>
            <person name="Cantley L.C."/>
            <person name="Band H."/>
            <person name="Shoelson S.E."/>
        </authorList>
    </citation>
    <scope>INTERACTION WITH SHB</scope>
</reference>
<reference key="15">
    <citation type="journal article" date="1999" name="J. Exp. Med.">
        <title>Induction of Fas ligand expression by HIV involves the interaction of Nef with the T cell receptor zeta chain.</title>
        <authorList>
            <person name="Xu X.-N."/>
            <person name="Laffert B."/>
            <person name="Screaton G.R."/>
            <person name="Kraft M."/>
            <person name="Wolf D."/>
            <person name="Kolanus W."/>
            <person name="Mongkolsapay J."/>
            <person name="McMichael A.J."/>
            <person name="Baur A.S."/>
        </authorList>
    </citation>
    <scope>INTERACTION WITH HIV-1 NEF (MICROBIAL INFECTION)</scope>
</reference>
<reference key="16">
    <citation type="journal article" date="1999" name="Proc. Natl. Acad. Sci. U.S.A.">
        <title>SLAP, a dimeric adapter protein, plays a functional role in T cell receptor signaling.</title>
        <authorList>
            <person name="Tang J."/>
            <person name="Sawasdikosol S."/>
            <person name="Chang J.-H."/>
            <person name="Burakoff S.J."/>
        </authorList>
    </citation>
    <scope>INTERACTION WITH SLA</scope>
</reference>
<reference key="17">
    <citation type="journal article" date="2001" name="Immunology">
        <title>Reduced T-cell receptor CD3zeta-chain protein and sustained CD3epsilon expression at the site of mycobacterial infection.</title>
        <authorList>
            <person name="Seitzer U."/>
            <person name="Kayser K."/>
            <person name="Hoehn H."/>
            <person name="Entzian P."/>
            <person name="Wacker H.H."/>
            <person name="Ploetz S."/>
            <person name="Flad H.D."/>
            <person name="Gerdes J."/>
            <person name="Maeurer M.J."/>
        </authorList>
    </citation>
    <scope>TISSUE SPECIFICITY</scope>
</reference>
<reference key="18">
    <citation type="journal article" date="2001" name="J. Exp. Med.">
        <title>The transmembrane adaptor protein TRIM regulates T-cell receptor (TCR) expression and TCR-mediated signaling via an association with the TCR zeta chain.</title>
        <authorList>
            <person name="Kirchgessner H."/>
            <person name="Dietrich J."/>
            <person name="Scherer J."/>
            <person name="Isomaeki P."/>
            <person name="Korinek V."/>
            <person name="Hilgert I."/>
            <person name="Bruyns E."/>
            <person name="Leo A."/>
            <person name="Cope A.P."/>
            <person name="Schraven B."/>
        </authorList>
    </citation>
    <scope>INTERACTION WITH TRAT1</scope>
</reference>
<reference key="19">
    <citation type="journal article" date="2002" name="Biochem. Biophys. Res. Commun.">
        <title>DOCK2 mediates T cell receptor-induced activation of Rac2 and IL-2 transcription.</title>
        <authorList>
            <person name="Nishihara H."/>
            <person name="Maeda M."/>
            <person name="Tsuda M."/>
            <person name="Makino Y."/>
            <person name="Sawa H."/>
            <person name="Nagashima K."/>
            <person name="Tanaka S."/>
        </authorList>
    </citation>
    <scope>INTERACTION WITH DOCK2</scope>
</reference>
<reference key="20">
    <citation type="journal article" date="2002" name="Int. Immunol.">
        <title>BY55/CD160 acts as a co-receptor in TCR signal transduction of a human circulating cytotoxic effector T lymphocyte subset lacking CD28 expression.</title>
        <authorList>
            <person name="Nikolova M."/>
            <person name="Marie-Cardine A."/>
            <person name="Boumsell L."/>
            <person name="Bensussan A."/>
        </authorList>
    </citation>
    <scope>SUBUNIT</scope>
    <scope>INTERACTION WITH CD160</scope>
</reference>
<reference key="21">
    <citation type="journal article" date="2003" name="Proc. Natl. Acad. Sci. U.S.A.">
        <title>Profiling of tyrosine phosphorylation pathways in human cells using mass spectrometry.</title>
        <authorList>
            <person name="Salomon A.R."/>
            <person name="Ficarro S.B."/>
            <person name="Brill L.M."/>
            <person name="Brinker A."/>
            <person name="Phung Q.T."/>
            <person name="Ericson C."/>
            <person name="Sauer K."/>
            <person name="Brock A."/>
            <person name="Horn D.M."/>
            <person name="Schultz P.G."/>
            <person name="Peters E.C."/>
        </authorList>
    </citation>
    <scope>PHOSPHORYLATION [LARGE SCALE ANALYSIS] AT TYR-83; TYR-111 AND TYR-142</scope>
    <scope>IDENTIFICATION BY MASS SPECTROMETRY [LARGE SCALE ANALYSIS]</scope>
</reference>
<reference key="22">
    <citation type="journal article" date="2004" name="Anal. Chem.">
        <title>Robust phosphoproteomic profiling of tyrosine phosphorylation sites from human T cells using immobilized metal affinity chromatography and tandem mass spectrometry.</title>
        <authorList>
            <person name="Brill L.M."/>
            <person name="Salomon A.R."/>
            <person name="Ficarro S.B."/>
            <person name="Mukherji M."/>
            <person name="Stettler-Gill M."/>
            <person name="Peters E.C."/>
        </authorList>
    </citation>
    <scope>PHOSPHORYLATION [LARGE SCALE ANALYSIS] AT SER-58; TYR-64; TYR-72; TYR-111 AND TYR-142</scope>
    <scope>IDENTIFICATION BY MASS SPECTROMETRY [LARGE SCALE ANALYSIS]</scope>
    <source>
        <tissue>Leukemic T-cell</tissue>
    </source>
</reference>
<reference key="23">
    <citation type="journal article" date="2005" name="J. Cell Biol.">
        <title>Src-like adaptor protein down-regulates T cell receptor (TCR)-CD3 expression by targeting TCRzeta for degradation.</title>
        <authorList>
            <person name="Myers M.D."/>
            <person name="Dragone L.L."/>
            <person name="Weiss A."/>
        </authorList>
    </citation>
    <scope>FUNCTION</scope>
    <scope>SUBCELLULAR LOCATION</scope>
    <scope>INTERACTION WITH SLAP1</scope>
</reference>
<reference key="24">
    <citation type="journal article" date="2005" name="J. Virol.">
        <title>Primary sooty mangabey simian immunodeficiency virus and human immunodeficiency virus type 2 nef alleles modulate cell surface expression of various human receptors and enhance viral infectivity and replication.</title>
        <authorList>
            <person name="Munch J."/>
            <person name="Schindler M."/>
            <person name="Wildum S."/>
            <person name="Rucker E."/>
            <person name="Bailer N."/>
            <person name="Knoop V."/>
            <person name="Novembre F.J."/>
            <person name="Kirchhoff F."/>
        </authorList>
    </citation>
    <scope>INTERACTION WITH HIV-2 NEF (MICROBIAL INFECTION)</scope>
</reference>
<reference key="25">
    <citation type="journal article" date="2005" name="Nat. Biotechnol.">
        <title>Immunoaffinity profiling of tyrosine phosphorylation in cancer cells.</title>
        <authorList>
            <person name="Rush J."/>
            <person name="Moritz A."/>
            <person name="Lee K.A."/>
            <person name="Guo A."/>
            <person name="Goss V.L."/>
            <person name="Spek E.J."/>
            <person name="Zhang H."/>
            <person name="Zha X.-M."/>
            <person name="Polakiewicz R.D."/>
            <person name="Comb M.J."/>
        </authorList>
    </citation>
    <scope>PHOSPHORYLATION [LARGE SCALE ANALYSIS] AT TYR-64; TYR-72; TYR-111 AND TYR-142</scope>
    <scope>IDENTIFICATION BY MASS SPECTROMETRY [LARGE SCALE ANALYSIS]</scope>
</reference>
<reference key="26">
    <citation type="journal article" date="2009" name="Sci. Signal.">
        <title>Quantitative phosphoproteomic analysis of T cell receptor signaling reveals system-wide modulation of protein-protein interactions.</title>
        <authorList>
            <person name="Mayya V."/>
            <person name="Lundgren D.H."/>
            <person name="Hwang S.-I."/>
            <person name="Rezaul K."/>
            <person name="Wu L."/>
            <person name="Eng J.K."/>
            <person name="Rodionov V."/>
            <person name="Han D.K."/>
        </authorList>
    </citation>
    <scope>PHOSPHORYLATION [LARGE SCALE ANALYSIS] AT TYR-64; TYR-72; TYR-111; TYR-123; TYR-142 AND TYR-153</scope>
    <scope>IDENTIFICATION BY MASS SPECTROMETRY [LARGE SCALE ANALYSIS]</scope>
    <source>
        <tissue>Leukemic T-cell</tissue>
    </source>
</reference>
<reference key="27">
    <citation type="journal article" date="2013" name="Mol. Cell. Biol.">
        <title>CD81 controls sustained T cell activation signaling and defines the maturation stages of cognate immunological synapses.</title>
        <authorList>
            <person name="Rocha-Perugini V."/>
            <person name="Zamai M."/>
            <person name="Gonzalez-Granado J.M."/>
            <person name="Barreiro O."/>
            <person name="Tejera E."/>
            <person name="Yanez-Mo M."/>
            <person name="Caiolfa V.R."/>
            <person name="Sanchez-Madrid F."/>
        </authorList>
    </citation>
    <scope>INTERACTION WITH CD81</scope>
    <scope>INTERACTION WITH ICAM1</scope>
    <scope>INTERACTION WITH CD9</scope>
</reference>
<reference key="28">
    <citation type="journal article" date="2014" name="J. Proteomics">
        <title>An enzyme assisted RP-RPLC approach for in-depth analysis of human liver phosphoproteome.</title>
        <authorList>
            <person name="Bian Y."/>
            <person name="Song C."/>
            <person name="Cheng K."/>
            <person name="Dong M."/>
            <person name="Wang F."/>
            <person name="Huang J."/>
            <person name="Sun D."/>
            <person name="Wang L."/>
            <person name="Ye M."/>
            <person name="Zou H."/>
        </authorList>
    </citation>
    <scope>IDENTIFICATION BY MASS SPECTROMETRY [LARGE SCALE ANALYSIS]</scope>
    <source>
        <tissue>Liver</tissue>
    </source>
</reference>
<reference key="29">
    <citation type="journal article" date="2016" name="J. Exp. Med.">
        <title>A novel human autoimmune syndrome caused by combined hypomorphic and activating mutations in ZAP-70.</title>
        <authorList>
            <person name="Chan A.Y."/>
            <person name="Punwani D."/>
            <person name="Kadlecek T.A."/>
            <person name="Cowan M.J."/>
            <person name="Olson J.L."/>
            <person name="Mathes E.F."/>
            <person name="Sunderam U."/>
            <person name="Fu S.M."/>
            <person name="Srinivasan R."/>
            <person name="Kuriyan J."/>
            <person name="Brenner S.E."/>
            <person name="Weiss A."/>
            <person name="Puck J.M."/>
        </authorList>
    </citation>
    <scope>INTERACTION WITH ZAP70</scope>
</reference>
<reference key="30">
    <citation type="journal article" date="2017" name="Cell. Signal.">
        <title>Crk adaptor proteins regulate CD3zeta chain phosphorylation and TCR/CD3 down-modulation in activated T cells.</title>
        <authorList>
            <person name="Dong G."/>
            <person name="Kalifa R."/>
            <person name="Nath P.R."/>
            <person name="Babichev Y."/>
            <person name="Gelkop S."/>
            <person name="Isakov N."/>
        </authorList>
    </citation>
    <scope>FUNCTION</scope>
    <scope>INTERACTION WITH CRK</scope>
</reference>
<reference key="31">
    <citation type="journal article" date="2017" name="Proc. Natl. Acad. Sci. U.S.A.">
        <title>Transmembrane features governing Fc receptor CD16A assembly with CD16A signaling adaptor molecules.</title>
        <authorList>
            <person name="Blazquez-Moreno A."/>
            <person name="Park S."/>
            <person name="Im W."/>
            <person name="Call M.J."/>
            <person name="Call M.E."/>
            <person name="Reyburn H.T."/>
        </authorList>
    </citation>
    <scope>INTERACTION WITH FCGR3A</scope>
</reference>
<reference key="32">
    <citation type="journal article" date="1993" name="Cell">
        <title>Binding of a high affinity phosphotyrosyl peptide to the Src SH2 domain: crystal structures of the complexed and peptide-free forms.</title>
        <authorList>
            <person name="Waksman G."/>
            <person name="Shoelson S.E."/>
            <person name="Pant N."/>
            <person name="Cowburn D."/>
            <person name="Kuriyan J."/>
        </authorList>
    </citation>
    <scope>STRUCTURE BY NMR OF 136-149</scope>
</reference>
<reference key="33">
    <citation type="journal article" date="2006" name="N. Engl. J. Med.">
        <title>Inherited and somatic CD3zeta mutations in a patient with T-cell deficiency.</title>
        <authorList>
            <person name="Rieux-Laucat F."/>
            <person name="Hivroz C."/>
            <person name="Lim A."/>
            <person name="Mateo V."/>
            <person name="Pellier I."/>
            <person name="Selz F."/>
            <person name="Fischer A."/>
            <person name="Le Deist F."/>
        </authorList>
    </citation>
    <scope>INVOLVEMENT IN IMD25</scope>
</reference>
<reference key="34">
    <citation type="journal article" date="1995" name="Nature">
        <title>Molecular basis for interaction of the protein tyrosine kinase ZAP-70 with the T-cell receptor.</title>
        <authorList>
            <person name="Hatada M.H."/>
            <person name="Lu X."/>
            <person name="Laird E.R."/>
            <person name="Green J."/>
            <person name="Morgenstern J.P."/>
            <person name="Lou M."/>
            <person name="Marr C.S."/>
            <person name="Phillips T.B."/>
            <person name="Ram M.K."/>
            <person name="Theriault K."/>
            <person name="Zoller M.J."/>
            <person name="Karas L.K."/>
        </authorList>
    </citation>
    <scope>X-RAY CRYSTALLOGRAPHY (1.9 ANGSTROMS) OF 69-87 IN COMPLEX WITH ZAP70</scope>
    <scope>INTERACTION WITH ZAP70</scope>
</reference>
<reference key="35">
    <citation type="journal article" date="1995" name="Proc. Natl. Acad. Sci. U.S.A.">
        <title>Solution structure of the Shc SH2 domain complexed with a tyrosine-phosphorylated peptide from the T-cell receptor.</title>
        <authorList>
            <person name="Zhou M.-M."/>
            <person name="Meadows R.P."/>
            <person name="Logan T.M."/>
            <person name="Yoon H.S."/>
            <person name="Wade W.S."/>
            <person name="Ravichandran K.S."/>
            <person name="Burakoff S.J."/>
            <person name="Fesik S.W."/>
        </authorList>
    </citation>
    <scope>STRUCTURE BY NMR OF 137-150 IN COMPLEX WITH SHC1</scope>
    <scope>INTERACTION WITH SHC1</scope>
</reference>
<reference key="36">
    <citation type="journal article" date="2005" name="J. Exp. Med.">
        <title>Structural basis for the function and regulation of the receptor protein tyrosine phosphatase CD45.</title>
        <authorList>
            <person name="Nam H.J."/>
            <person name="Poy F."/>
            <person name="Saito H."/>
            <person name="Frederick C.A."/>
        </authorList>
    </citation>
    <scope>X-RAY CRYSTALLOGRAPHY (2.9 ANGSTROMS) OF 80-85 IN COMPLEX WITH PTPRC</scope>
    <scope>INTERACTION WITH PTPRC</scope>
</reference>
<reference key="37">
    <citation type="journal article" date="2006" name="Cell">
        <title>The structure of the zetazeta transmembrane dimer reveals features essential for its assembly with the T cell receptor.</title>
        <authorList>
            <person name="Call M.E."/>
            <person name="Schnell J.R."/>
            <person name="Xu C."/>
            <person name="Lutz R.A."/>
            <person name="Chou J.J."/>
            <person name="Wucherpfennig K.W."/>
        </authorList>
    </citation>
    <scope>STRUCTURE BY NMR OF 30-60</scope>
    <scope>IDENTIFICATION BY MASS SPECTROMETRY</scope>
    <scope>INTERACTION WITH THE T-CELL RECEPTOR</scope>
    <scope>SUBUNIT</scope>
</reference>
<name>CD3Z_HUMAN</name>
<accession>P20963</accession>
<accession>B1AK49</accession>
<accession>Q5VX13</accession>
<accession>Q8TAX4</accession>
<dbReference type="EMBL" id="J04132">
    <property type="protein sequence ID" value="AAA60394.1"/>
    <property type="molecule type" value="mRNA"/>
</dbReference>
<dbReference type="EMBL" id="AK313946">
    <property type="protein sequence ID" value="BAG36664.1"/>
    <property type="molecule type" value="mRNA"/>
</dbReference>
<dbReference type="EMBL" id="DQ072717">
    <property type="protein sequence ID" value="AAY57330.1"/>
    <property type="molecule type" value="Genomic_DNA"/>
</dbReference>
<dbReference type="EMBL" id="AL031733">
    <property type="status" value="NOT_ANNOTATED_CDS"/>
    <property type="molecule type" value="Genomic_DNA"/>
</dbReference>
<dbReference type="EMBL" id="AL359962">
    <property type="status" value="NOT_ANNOTATED_CDS"/>
    <property type="molecule type" value="Genomic_DNA"/>
</dbReference>
<dbReference type="EMBL" id="CH471067">
    <property type="protein sequence ID" value="EAW90792.1"/>
    <property type="molecule type" value="Genomic_DNA"/>
</dbReference>
<dbReference type="EMBL" id="BC025703">
    <property type="protein sequence ID" value="AAH25703.1"/>
    <property type="molecule type" value="mRNA"/>
</dbReference>
<dbReference type="CCDS" id="CCDS1260.1">
    <molecule id="P20963-3"/>
</dbReference>
<dbReference type="CCDS" id="CCDS1261.1">
    <molecule id="P20963-1"/>
</dbReference>
<dbReference type="PIR" id="A31768">
    <property type="entry name" value="A31768"/>
</dbReference>
<dbReference type="RefSeq" id="NP_000725.1">
    <molecule id="P20963-3"/>
    <property type="nucleotide sequence ID" value="NM_000734.4"/>
</dbReference>
<dbReference type="RefSeq" id="NP_932170.1">
    <molecule id="P20963-1"/>
    <property type="nucleotide sequence ID" value="NM_198053.3"/>
</dbReference>
<dbReference type="PDB" id="1TCE">
    <property type="method" value="NMR"/>
    <property type="chains" value="B=137-150"/>
</dbReference>
<dbReference type="PDB" id="1YGR">
    <property type="method" value="X-ray"/>
    <property type="resolution" value="2.90 A"/>
    <property type="chains" value="C/D=80-85"/>
</dbReference>
<dbReference type="PDB" id="2HAC">
    <property type="method" value="NMR"/>
    <property type="chains" value="A/B=28-60"/>
</dbReference>
<dbReference type="PDB" id="2OQ1">
    <property type="method" value="X-ray"/>
    <property type="resolution" value="1.90 A"/>
    <property type="chains" value="B=69-87"/>
</dbReference>
<dbReference type="PDB" id="3IK5">
    <property type="method" value="X-ray"/>
    <property type="resolution" value="2.05 A"/>
    <property type="chains" value="B/D=63-80"/>
</dbReference>
<dbReference type="PDB" id="3IOZ">
    <property type="method" value="X-ray"/>
    <property type="resolution" value="3.70 A"/>
    <property type="chains" value="B=51-93"/>
</dbReference>
<dbReference type="PDB" id="4XZ1">
    <property type="method" value="X-ray"/>
    <property type="resolution" value="2.80 A"/>
    <property type="chains" value="B=69-87"/>
</dbReference>
<dbReference type="PDB" id="6JXR">
    <property type="method" value="EM"/>
    <property type="resolution" value="3.70 A"/>
    <property type="chains" value="a/b=1-164"/>
</dbReference>
<dbReference type="PDB" id="7FJD">
    <property type="method" value="EM"/>
    <property type="resolution" value="3.20 A"/>
    <property type="chains" value="a/b=1-164"/>
</dbReference>
<dbReference type="PDB" id="7FJE">
    <property type="method" value="EM"/>
    <property type="resolution" value="3.00 A"/>
    <property type="chains" value="a/b=1-164"/>
</dbReference>
<dbReference type="PDB" id="7FJF">
    <property type="method" value="EM"/>
    <property type="resolution" value="3.10 A"/>
    <property type="chains" value="a/b=1-164"/>
</dbReference>
<dbReference type="PDB" id="7PHR">
    <property type="method" value="EM"/>
    <property type="resolution" value="3.08 A"/>
    <property type="chains" value="Z/z=22-57"/>
</dbReference>
<dbReference type="PDB" id="8ES7">
    <property type="method" value="EM"/>
    <property type="resolution" value="3.04 A"/>
    <property type="chains" value="Y/Z=1-164"/>
</dbReference>
<dbReference type="PDB" id="8ES8">
    <property type="method" value="EM"/>
    <property type="resolution" value="2.65 A"/>
    <property type="chains" value="Y/Z=1-164"/>
</dbReference>
<dbReference type="PDB" id="8ES9">
    <property type="method" value="EM"/>
    <property type="resolution" value="3.25 A"/>
    <property type="chains" value="Y/Z=1-164"/>
</dbReference>
<dbReference type="PDB" id="8J8I">
    <property type="method" value="NMR"/>
    <property type="chains" value="A=25-164"/>
</dbReference>
<dbReference type="PDB" id="8JC0">
    <property type="method" value="EM"/>
    <property type="resolution" value="3.40 A"/>
    <property type="chains" value="a/b=1-164"/>
</dbReference>
<dbReference type="PDB" id="8JCB">
    <property type="method" value="EM"/>
    <property type="resolution" value="9.50 A"/>
    <property type="chains" value="A/B/a/b=1-164"/>
</dbReference>
<dbReference type="PDB" id="8TW4">
    <property type="method" value="EM"/>
    <property type="resolution" value="3.30 A"/>
    <property type="chains" value="X/Y=1-164"/>
</dbReference>
<dbReference type="PDB" id="8TW6">
    <property type="method" value="EM"/>
    <property type="resolution" value="3.10 A"/>
    <property type="chains" value="X/Y=1-164"/>
</dbReference>
<dbReference type="PDB" id="8WXE">
    <property type="method" value="EM"/>
    <property type="resolution" value="4.00 A"/>
    <property type="chains" value="a/b=1-164"/>
</dbReference>
<dbReference type="PDB" id="8WY0">
    <property type="method" value="EM"/>
    <property type="resolution" value="3.80 A"/>
    <property type="chains" value="a/b=1-164"/>
</dbReference>
<dbReference type="PDB" id="8WYI">
    <property type="method" value="EM"/>
    <property type="resolution" value="3.90 A"/>
    <property type="chains" value="a/b=1-164"/>
</dbReference>
<dbReference type="PDB" id="8YC0">
    <property type="method" value="EM"/>
    <property type="resolution" value="4.12 A"/>
    <property type="chains" value="a/b=1-164"/>
</dbReference>
<dbReference type="PDB" id="9BBC">
    <property type="method" value="EM"/>
    <property type="resolution" value="3.30 A"/>
    <property type="chains" value="X/Y=1-164"/>
</dbReference>
<dbReference type="PDB" id="9C3E">
    <property type="method" value="EM"/>
    <property type="resolution" value="3.50 A"/>
    <property type="chains" value="X/Y=1-164"/>
</dbReference>
<dbReference type="PDB" id="9CI8">
    <property type="method" value="EM"/>
    <property type="resolution" value="3.01 A"/>
    <property type="chains" value="a/b=27-57"/>
</dbReference>
<dbReference type="PDB" id="9CIA">
    <property type="method" value="EM"/>
    <property type="resolution" value="3.39 A"/>
    <property type="chains" value="a/b=27-55"/>
</dbReference>
<dbReference type="PDB" id="9CQ4">
    <property type="method" value="EM"/>
    <property type="resolution" value="3.27 A"/>
    <property type="chains" value="Y/Z=1-164"/>
</dbReference>
<dbReference type="PDBsum" id="1TCE"/>
<dbReference type="PDBsum" id="1YGR"/>
<dbReference type="PDBsum" id="2HAC"/>
<dbReference type="PDBsum" id="2OQ1"/>
<dbReference type="PDBsum" id="3IK5"/>
<dbReference type="PDBsum" id="3IOZ"/>
<dbReference type="PDBsum" id="4XZ1"/>
<dbReference type="PDBsum" id="6JXR"/>
<dbReference type="PDBsum" id="7FJD"/>
<dbReference type="PDBsum" id="7FJE"/>
<dbReference type="PDBsum" id="7FJF"/>
<dbReference type="PDBsum" id="7PHR"/>
<dbReference type="PDBsum" id="8ES7"/>
<dbReference type="PDBsum" id="8ES8"/>
<dbReference type="PDBsum" id="8ES9"/>
<dbReference type="PDBsum" id="8J8I"/>
<dbReference type="PDBsum" id="8JC0"/>
<dbReference type="PDBsum" id="8JCB"/>
<dbReference type="PDBsum" id="8TW4"/>
<dbReference type="PDBsum" id="8TW6"/>
<dbReference type="PDBsum" id="8WXE"/>
<dbReference type="PDBsum" id="8WY0"/>
<dbReference type="PDBsum" id="8WYI"/>
<dbReference type="PDBsum" id="8YC0"/>
<dbReference type="PDBsum" id="9BBC"/>
<dbReference type="PDBsum" id="9C3E"/>
<dbReference type="PDBsum" id="9CI8"/>
<dbReference type="PDBsum" id="9CIA"/>
<dbReference type="PDBsum" id="9CQ4"/>
<dbReference type="BMRB" id="P20963"/>
<dbReference type="EMDB" id="EMD-13427"/>
<dbReference type="EMDB" id="EMD-28570"/>
<dbReference type="EMDB" id="EMD-28571"/>
<dbReference type="EMDB" id="EMD-28572"/>
<dbReference type="EMDB" id="EMD-31618"/>
<dbReference type="EMDB" id="EMD-31619"/>
<dbReference type="EMDB" id="EMD-31620"/>
<dbReference type="EMDB" id="EMD-36149"/>
<dbReference type="EMDB" id="EMD-36156"/>
<dbReference type="EMDB" id="EMD-37904"/>
<dbReference type="EMDB" id="EMD-37914"/>
<dbReference type="EMDB" id="EMD-37929"/>
<dbReference type="EMDB" id="EMD-39128"/>
<dbReference type="EMDB" id="EMD-44417"/>
<dbReference type="EMDB" id="EMD-45166"/>
<dbReference type="EMDB" id="EMD-45614"/>
<dbReference type="EMDB" id="EMD-45615"/>
<dbReference type="EMDB" id="EMD-45808"/>
<dbReference type="EMDB" id="EMD-9895"/>
<dbReference type="SMR" id="P20963"/>
<dbReference type="BioGRID" id="107357">
    <property type="interactions" value="37"/>
</dbReference>
<dbReference type="ComplexPortal" id="CPX-6482">
    <property type="entry name" value="Alpha-beta T cell receptor complex, TRBC2 variant"/>
</dbReference>
<dbReference type="ComplexPortal" id="CPX-6581">
    <property type="entry name" value="Alpha-beta T cell receptor complex, TRBC1 variant"/>
</dbReference>
<dbReference type="ComplexPortal" id="CPX-6582">
    <property type="entry name" value="Gamma-delta T cell receptor complex, TRGC1 variant"/>
</dbReference>
<dbReference type="ComplexPortal" id="CPX-6603">
    <property type="entry name" value="Gamma-delta T cell receptor complex, TRGC2 variant"/>
</dbReference>
<dbReference type="CORUM" id="P20963"/>
<dbReference type="DIP" id="DIP-35404N"/>
<dbReference type="ELM" id="P20963"/>
<dbReference type="FunCoup" id="P20963">
    <property type="interactions" value="457"/>
</dbReference>
<dbReference type="IntAct" id="P20963">
    <property type="interactions" value="164"/>
</dbReference>
<dbReference type="MINT" id="P20963"/>
<dbReference type="STRING" id="9606.ENSP00000354782"/>
<dbReference type="DrugBank" id="DB15395">
    <property type="generic name" value="Elranatamab"/>
</dbReference>
<dbReference type="DrugBank" id="DB16371">
    <property type="generic name" value="Glofitamab"/>
</dbReference>
<dbReference type="DrugBank" id="DB00075">
    <property type="generic name" value="Muromonab"/>
</dbReference>
<dbReference type="DrugBank" id="DB16684">
    <property type="generic name" value="Odronextamab"/>
</dbReference>
<dbReference type="DrugBank" id="DB16678">
    <property type="generic name" value="Talquetamab"/>
</dbReference>
<dbReference type="DrugBank" id="DB17256">
    <property type="generic name" value="Tarlatamab"/>
</dbReference>
<dbReference type="DrugBank" id="DB16655">
    <property type="generic name" value="Teclistamab"/>
</dbReference>
<dbReference type="TCDB" id="8.A.128.7.1">
    <property type="family name" value="the signaling adaptor protein karap/dap12/tyrobp (sap) family"/>
</dbReference>
<dbReference type="iPTMnet" id="P20963"/>
<dbReference type="PhosphoSitePlus" id="P20963"/>
<dbReference type="BioMuta" id="CD247"/>
<dbReference type="DMDM" id="23830999"/>
<dbReference type="jPOST" id="P20963"/>
<dbReference type="MassIVE" id="P20963"/>
<dbReference type="PaxDb" id="9606-ENSP00000354782"/>
<dbReference type="PeptideAtlas" id="P20963"/>
<dbReference type="ProteomicsDB" id="53833">
    <molecule id="P20963-1"/>
</dbReference>
<dbReference type="ProteomicsDB" id="53834">
    <molecule id="P20963-3"/>
</dbReference>
<dbReference type="ABCD" id="P20963">
    <property type="antibodies" value="1 sequenced antibody"/>
</dbReference>
<dbReference type="Antibodypedia" id="1663">
    <property type="antibodies" value="1813 antibodies from 45 providers"/>
</dbReference>
<dbReference type="DNASU" id="919"/>
<dbReference type="Ensembl" id="ENST00000362089.10">
    <molecule id="P20963-1"/>
    <property type="protein sequence ID" value="ENSP00000354782.5"/>
    <property type="gene ID" value="ENSG00000198821.12"/>
</dbReference>
<dbReference type="Ensembl" id="ENST00000392122.4">
    <molecule id="P20963-3"/>
    <property type="protein sequence ID" value="ENSP00000375969.3"/>
    <property type="gene ID" value="ENSG00000198821.12"/>
</dbReference>
<dbReference type="GeneID" id="919"/>
<dbReference type="KEGG" id="hsa:919"/>
<dbReference type="MANE-Select" id="ENST00000362089.10">
    <property type="protein sequence ID" value="ENSP00000354782.5"/>
    <property type="RefSeq nucleotide sequence ID" value="NM_198053.3"/>
    <property type="RefSeq protein sequence ID" value="NP_932170.1"/>
</dbReference>
<dbReference type="UCSC" id="uc001gei.5">
    <molecule id="P20963-1"/>
    <property type="organism name" value="human"/>
</dbReference>
<dbReference type="AGR" id="HGNC:1677"/>
<dbReference type="CTD" id="919"/>
<dbReference type="DisGeNET" id="919"/>
<dbReference type="GeneCards" id="CD247"/>
<dbReference type="HGNC" id="HGNC:1677">
    <property type="gene designation" value="CD247"/>
</dbReference>
<dbReference type="HPA" id="ENSG00000198821">
    <property type="expression patterns" value="Group enriched (bone marrow, lymphoid tissue)"/>
</dbReference>
<dbReference type="MalaCards" id="CD247"/>
<dbReference type="MIM" id="186780">
    <property type="type" value="gene"/>
</dbReference>
<dbReference type="MIM" id="610163">
    <property type="type" value="phenotype"/>
</dbReference>
<dbReference type="neXtProt" id="NX_P20963"/>
<dbReference type="OpenTargets" id="ENSG00000198821"/>
<dbReference type="Orphanet" id="85410">
    <property type="disease" value="Oligoarticular juvenile idiopathic arthritis"/>
</dbReference>
<dbReference type="Orphanet" id="85408">
    <property type="disease" value="Rheumatoid factor-negative polyarticular juvenile idiopathic arthritis"/>
</dbReference>
<dbReference type="Orphanet" id="169160">
    <property type="disease" value="T-B+ severe combined immunodeficiency due to CD3delta/CD3epsilon/CD3zeta"/>
</dbReference>
<dbReference type="PharmGKB" id="PA26219"/>
<dbReference type="VEuPathDB" id="HostDB:ENSG00000198821"/>
<dbReference type="eggNOG" id="ENOG502S5AZ">
    <property type="taxonomic scope" value="Eukaryota"/>
</dbReference>
<dbReference type="GeneTree" id="ENSGT00390000018208"/>
<dbReference type="HOGENOM" id="CLU_119104_0_0_1"/>
<dbReference type="InParanoid" id="P20963"/>
<dbReference type="OMA" id="TDPKLCY"/>
<dbReference type="OrthoDB" id="9941225at2759"/>
<dbReference type="PAN-GO" id="P20963">
    <property type="GO annotations" value="2 GO annotations based on evolutionary models"/>
</dbReference>
<dbReference type="PhylomeDB" id="P20963"/>
<dbReference type="TreeFam" id="TF330937"/>
<dbReference type="PathwayCommons" id="P20963"/>
<dbReference type="Reactome" id="R-HSA-164944">
    <molecule id="P20963-1"/>
    <property type="pathway name" value="Nef and signal transduction"/>
</dbReference>
<dbReference type="Reactome" id="R-HSA-198933">
    <molecule id="P20963-1"/>
    <property type="pathway name" value="Immunoregulatory interactions between a Lymphoid and a non-Lymphoid cell"/>
</dbReference>
<dbReference type="Reactome" id="R-HSA-202424">
    <molecule id="P20963-1"/>
    <property type="pathway name" value="Downstream TCR signaling"/>
</dbReference>
<dbReference type="Reactome" id="R-HSA-202427">
    <molecule id="P20963-1"/>
    <property type="pathway name" value="Phosphorylation of CD3 and TCR zeta chains"/>
</dbReference>
<dbReference type="Reactome" id="R-HSA-202430">
    <molecule id="P20963-1"/>
    <property type="pathway name" value="Translocation of ZAP-70 to Immunological synapse"/>
</dbReference>
<dbReference type="Reactome" id="R-HSA-202433">
    <molecule id="P20963-1"/>
    <property type="pathway name" value="Generation of second messenger molecules"/>
</dbReference>
<dbReference type="Reactome" id="R-HSA-2029481">
    <molecule id="P20963-1"/>
    <property type="pathway name" value="FCGR activation"/>
</dbReference>
<dbReference type="Reactome" id="R-HSA-2029482">
    <molecule id="P20963-1"/>
    <property type="pathway name" value="Regulation of actin dynamics for phagocytic cup formation"/>
</dbReference>
<dbReference type="Reactome" id="R-HSA-2029485">
    <molecule id="P20963-1"/>
    <property type="pathway name" value="Role of phospholipids in phagocytosis"/>
</dbReference>
<dbReference type="Reactome" id="R-HSA-389948">
    <molecule id="P20963-1"/>
    <property type="pathway name" value="Co-inhibition by PD-1"/>
</dbReference>
<dbReference type="Reactome" id="R-HSA-9664323">
    <molecule id="P20963-1"/>
    <property type="pathway name" value="FCGR3A-mediated IL10 synthesis"/>
</dbReference>
<dbReference type="Reactome" id="R-HSA-9664422">
    <molecule id="P20963-1"/>
    <property type="pathway name" value="FCGR3A-mediated phagocytosis"/>
</dbReference>
<dbReference type="SignaLink" id="P20963"/>
<dbReference type="SIGNOR" id="P20963"/>
<dbReference type="BioGRID-ORCS" id="919">
    <property type="hits" value="11 hits in 1161 CRISPR screens"/>
</dbReference>
<dbReference type="ChiTaRS" id="CD247">
    <property type="organism name" value="human"/>
</dbReference>
<dbReference type="EvolutionaryTrace" id="P20963"/>
<dbReference type="GeneWiki" id="CD247"/>
<dbReference type="GenomeRNAi" id="919"/>
<dbReference type="Pharos" id="P20963">
    <property type="development level" value="Tbio"/>
</dbReference>
<dbReference type="PRO" id="PR:P20963"/>
<dbReference type="Proteomes" id="UP000005640">
    <property type="component" value="Chromosome 1"/>
</dbReference>
<dbReference type="RNAct" id="P20963">
    <property type="molecule type" value="protein"/>
</dbReference>
<dbReference type="Bgee" id="ENSG00000198821">
    <property type="expression patterns" value="Expressed in granulocyte and 109 other cell types or tissues"/>
</dbReference>
<dbReference type="GO" id="GO:0042105">
    <property type="term" value="C:alpha-beta T cell receptor complex"/>
    <property type="evidence" value="ECO:0000314"/>
    <property type="project" value="UniProtKB"/>
</dbReference>
<dbReference type="GO" id="GO:0005737">
    <property type="term" value="C:cytoplasm"/>
    <property type="evidence" value="ECO:0000314"/>
    <property type="project" value="MGI"/>
</dbReference>
<dbReference type="GO" id="GO:0033001">
    <property type="term" value="C:Fc-gamma receptor III complex"/>
    <property type="evidence" value="ECO:0000314"/>
    <property type="project" value="UniProtKB"/>
</dbReference>
<dbReference type="GO" id="GO:0042106">
    <property type="term" value="C:gamma-delta T cell receptor complex"/>
    <property type="evidence" value="ECO:0000303"/>
    <property type="project" value="ComplexPortal"/>
</dbReference>
<dbReference type="GO" id="GO:0005794">
    <property type="term" value="C:Golgi apparatus"/>
    <property type="evidence" value="ECO:0007669"/>
    <property type="project" value="Ensembl"/>
</dbReference>
<dbReference type="GO" id="GO:0005886">
    <property type="term" value="C:plasma membrane"/>
    <property type="evidence" value="ECO:0000314"/>
    <property type="project" value="UniProtKB"/>
</dbReference>
<dbReference type="GO" id="GO:0042101">
    <property type="term" value="C:T cell receptor complex"/>
    <property type="evidence" value="ECO:0000314"/>
    <property type="project" value="MGI"/>
</dbReference>
<dbReference type="GO" id="GO:0042802">
    <property type="term" value="F:identical protein binding"/>
    <property type="evidence" value="ECO:0000314"/>
    <property type="project" value="CAFA"/>
</dbReference>
<dbReference type="GO" id="GO:0046982">
    <property type="term" value="F:protein heterodimerization activity"/>
    <property type="evidence" value="ECO:0000314"/>
    <property type="project" value="UniProtKB"/>
</dbReference>
<dbReference type="GO" id="GO:0042803">
    <property type="term" value="F:protein homodimerization activity"/>
    <property type="evidence" value="ECO:0000314"/>
    <property type="project" value="UniProtKB"/>
</dbReference>
<dbReference type="GO" id="GO:1990782">
    <property type="term" value="F:protein tyrosine kinase binding"/>
    <property type="evidence" value="ECO:0000353"/>
    <property type="project" value="CAFA"/>
</dbReference>
<dbReference type="GO" id="GO:0004888">
    <property type="term" value="F:transmembrane signaling receptor activity"/>
    <property type="evidence" value="ECO:0000305"/>
    <property type="project" value="UniProtKB"/>
</dbReference>
<dbReference type="GO" id="GO:0002250">
    <property type="term" value="P:adaptive immune response"/>
    <property type="evidence" value="ECO:0000303"/>
    <property type="project" value="ComplexPortal"/>
</dbReference>
<dbReference type="GO" id="GO:0046631">
    <property type="term" value="P:alpha-beta T cell activation"/>
    <property type="evidence" value="ECO:0000303"/>
    <property type="project" value="ComplexPortal"/>
</dbReference>
<dbReference type="GO" id="GO:0007166">
    <property type="term" value="P:cell surface receptor signaling pathway"/>
    <property type="evidence" value="ECO:0000305"/>
    <property type="project" value="UniProtKB"/>
</dbReference>
<dbReference type="GO" id="GO:0038094">
    <property type="term" value="P:Fc-gamma receptor signaling pathway"/>
    <property type="evidence" value="ECO:0000314"/>
    <property type="project" value="UniProtKB"/>
</dbReference>
<dbReference type="GO" id="GO:0046629">
    <property type="term" value="P:gamma-delta T cell activation"/>
    <property type="evidence" value="ECO:0000303"/>
    <property type="project" value="ComplexPortal"/>
</dbReference>
<dbReference type="GO" id="GO:2000010">
    <property type="term" value="P:positive regulation of protein localization to cell surface"/>
    <property type="evidence" value="ECO:0007669"/>
    <property type="project" value="Ensembl"/>
</dbReference>
<dbReference type="GO" id="GO:0051259">
    <property type="term" value="P:protein complex oligomerization"/>
    <property type="evidence" value="ECO:0000353"/>
    <property type="project" value="DisProt"/>
</dbReference>
<dbReference type="GO" id="GO:0065003">
    <property type="term" value="P:protein-containing complex assembly"/>
    <property type="evidence" value="ECO:0000314"/>
    <property type="project" value="UniProtKB"/>
</dbReference>
<dbReference type="GO" id="GO:0050852">
    <property type="term" value="P:T cell receptor signaling pathway"/>
    <property type="evidence" value="ECO:0000314"/>
    <property type="project" value="UniProt"/>
</dbReference>
<dbReference type="DisProt" id="DP00200"/>
<dbReference type="IDEAL" id="IID00544"/>
<dbReference type="InterPro" id="IPR021663">
    <property type="entry name" value="CD3_zeta/IgE_Fc_rcpt_gamma"/>
</dbReference>
<dbReference type="InterPro" id="IPR003110">
    <property type="entry name" value="Phos_immunorcpt_sig_ITAM"/>
</dbReference>
<dbReference type="InterPro" id="IPR024128">
    <property type="entry name" value="T-cell_CD3_zeta"/>
</dbReference>
<dbReference type="PANTHER" id="PTHR10035">
    <property type="entry name" value="T-CELL SURFACE GLYCOPROTEIN CD3 ZETA CHAIN"/>
    <property type="match status" value="1"/>
</dbReference>
<dbReference type="PANTHER" id="PTHR10035:SF2">
    <property type="entry name" value="T-CELL SURFACE GLYCOPROTEIN CD3 ZETA CHAIN"/>
    <property type="match status" value="1"/>
</dbReference>
<dbReference type="Pfam" id="PF02189">
    <property type="entry name" value="ITAM"/>
    <property type="match status" value="2"/>
</dbReference>
<dbReference type="Pfam" id="PF11628">
    <property type="entry name" value="TCR_zetazeta"/>
    <property type="match status" value="1"/>
</dbReference>
<dbReference type="SMART" id="SM00077">
    <property type="entry name" value="ITAM"/>
    <property type="match status" value="3"/>
</dbReference>
<dbReference type="PROSITE" id="PS51055">
    <property type="entry name" value="ITAM_1"/>
    <property type="match status" value="3"/>
</dbReference>
<proteinExistence type="evidence at protein level"/>
<comment type="function">
    <text evidence="1 11 12 14 20 23 25">Part of the TCR-CD3 complex present on T-lymphocyte cell surface that plays an essential role in adaptive immune response. When antigen presenting cells (APCs) activate T-cell receptor (TCR), TCR-mediated signals are transmitted across the cell membrane by the CD3 chains CD3D, CD3E, CD3G and CD3Z. All CD3 chains contain immunoreceptor tyrosine-based activation motifs (ITAMs) in their cytoplasmic domain. Upon TCR engagement, these motifs become phosphorylated by Src family protein tyrosine kinases LCK and FYN, resulting in the activation of downstream signaling pathways (PubMed:1384049, PubMed:1385158, PubMed:2470098, PubMed:7509083). CD3Z ITAMs phosphorylation creates multiple docking sites for the protein kinase ZAP70 leading to ZAP70 phosphorylation and its conversion into a catalytically active enzyme (PubMed:7509083). Plays an important role in intrathymic T-cell differentiation. Additionally, participates in the activity-dependent synapse formation of retinal ganglion cells (RGCs) in both the retina and dorsal lateral geniculate nucleus (dLGN) (By similarity).</text>
</comment>
<comment type="subunit">
    <text evidence="1 6 7 9 10 11 12 13 17 18 19 21 22 23 24 26 27 28">The TCR-CD3 complex is composed of a CD3D/CD3E and a CD3G/CD3E heterodimers that preferentially associate with TCRalpha and TCRbeta, respectively, to form TCRalpha/CD3E/CD3G and TCRbeta/CD3G/CD3E trimers. In turn, the hexamer interacts with CD3Z homodimer to form the TCR-CD3 complex. Alternatively, TCRalpha and TCRbeta can be replaced by TCRgamma and TCRdelta (PubMed:17055436). Interacts with SLA (PubMed:10449770). Interacts with TRAT1 (PubMed:11390434). Interacts with DOCK2 (PubMed:12176041). Interacts with SLA2. Interacts with SHB (PubMed:9484780). Interacts with ZAP70 (PubMed:26783323, PubMed:7659156). Interacts (tyrosine phosphorylated) with SHC1 (via SH2 domain) (PubMed:7544002). Interacts with PTPRC (PubMed:15684325). Interacts with CRK; this interaction regulates CD3Z phosphorylation (PubMed:28465009). Interacts (on T cell side) with CD81, ICAM1 and CD9 at immunological synapses between antigen-presenting cells and T cells (PubMed:23858057). Interacts with CD160 (PubMed:11978774). Interacts with LY6E (By similarity). The signaling subunit of immunoglobulin gamma (IgG) Fc receptor complex. As a homodimer or a heterodimer with FCER1G, associates with the ligand binding subunit FCGR3A (via transmembrane domain); this interaction is a prerequisite for Fc receptor complex expression on the cell surface. Interacts with CD5 (PubMed:1384049, PubMed:1385158).</text>
</comment>
<comment type="subunit">
    <text evidence="5">(Microbial infection) Interacts with HIV-1 Nef; this interaction up-regulates the expression of the Fas ligand (FASLG) at the cell surface.</text>
</comment>
<comment type="subunit">
    <text evidence="15 29">(Microbial infection) Interacts with HIV-2 Nef protein; this interaction induces down-regulation of cell surface TCR/CD3 complexes.</text>
</comment>
<comment type="interaction">
    <interactant intactId="EBI-1165705">
        <id>P20963</id>
    </interactant>
    <interactant intactId="EBI-743313">
        <id>P49407</id>
        <label>ARRB1</label>
    </interactant>
    <organismsDiffer>false</organismsDiffer>
    <experiments>9</experiments>
</comment>
<comment type="interaction">
    <interactant intactId="EBI-1165705">
        <id>P20963</id>
    </interactant>
    <interactant intactId="EBI-25891409">
        <id>Q99700-5</id>
        <label>ATXN2</label>
    </interactant>
    <organismsDiffer>false</organismsDiffer>
    <experiments>3</experiments>
</comment>
<comment type="interaction">
    <interactant intactId="EBI-1165705">
        <id>P20963</id>
    </interactant>
    <interactant intactId="EBI-1165705">
        <id>P20963</id>
        <label>CD247</label>
    </interactant>
    <organismsDiffer>false</organismsDiffer>
    <experiments>6</experiments>
</comment>
<comment type="interaction">
    <interactant intactId="EBI-1165705">
        <id>P20963</id>
    </interactant>
    <interactant intactId="EBI-389883">
        <id>P16333</id>
        <label>NCK1</label>
    </interactant>
    <organismsDiffer>false</organismsDiffer>
    <experiments>2</experiments>
</comment>
<comment type="interaction">
    <interactant intactId="EBI-1165705">
        <id>P20963</id>
    </interactant>
    <interactant intactId="EBI-1211241">
        <id>Q9Y2R2</id>
        <label>PTPN22</label>
    </interactant>
    <organismsDiffer>false</organismsDiffer>
    <experiments>4</experiments>
</comment>
<comment type="interaction">
    <interactant intactId="EBI-1165705">
        <id>P20963</id>
    </interactant>
    <interactant intactId="EBI-6983382">
        <id>O60880</id>
        <label>SH2D1A</label>
    </interactant>
    <organismsDiffer>false</organismsDiffer>
    <experiments>5</experiments>
</comment>
<comment type="interaction">
    <interactant intactId="EBI-1165705">
        <id>P20963</id>
    </interactant>
    <interactant intactId="EBI-1211276">
        <id>P43403</id>
        <label>ZAP70</label>
    </interactant>
    <organismsDiffer>false</organismsDiffer>
    <experiments>23</experiments>
</comment>
<comment type="interaction">
    <interactant intactId="EBI-1165705">
        <id>P20963</id>
    </interactant>
    <interactant intactId="EBI-8038963">
        <id>P47774</id>
        <label>Ccr7</label>
    </interactant>
    <organismsDiffer>true</organismsDiffer>
    <experiments>2</experiments>
</comment>
<comment type="subcellular location">
    <subcellularLocation>
        <location evidence="1">Cell membrane</location>
        <topology>Single-pass type I membrane protein</topology>
    </subcellularLocation>
</comment>
<comment type="alternative products">
    <event type="alternative splicing"/>
    <isoform>
        <id>P20963-1</id>
        <name>1</name>
        <name>CD-3-zeta</name>
        <sequence type="displayed"/>
    </isoform>
    <isoform>
        <id>P20963-2</id>
        <name>2</name>
        <name>CD-3-eta</name>
        <sequence type="not described"/>
    </isoform>
    <isoform>
        <id>P20963-3</id>
        <name>3</name>
        <sequence type="described" ref="VSP_036459"/>
    </isoform>
</comment>
<comment type="tissue specificity">
    <text evidence="8">CD3Z is expressed in normal lymphoid tissue and in peripheral blood mononuclear cells (PBMCs) (PubMed:11722641).</text>
</comment>
<comment type="domain">
    <text>The ITAM domains mediate interaction with SHB.</text>
</comment>
<comment type="PTM">
    <text evidence="20">Phosphorylated on Tyr residues after T-cell receptor triggering by LCK in association with CD4/CD8.</text>
</comment>
<comment type="disease" evidence="16">
    <disease id="DI-02209">
        <name>Immunodeficiency 25</name>
        <acronym>IMD25</acronym>
        <description>An immunological deficiency characterized by T-cells impaired immune response to alloantigens, tetanus toxoid and mitogens.</description>
        <dbReference type="MIM" id="610163"/>
    </disease>
    <text>The disease is caused by variants affecting the gene represented in this entry.</text>
</comment>
<comment type="similarity">
    <text evidence="32">Belongs to the CD3Z/FCER1G family.</text>
</comment>
<comment type="online information" name="CD247base">
    <link uri="https://databases.lovd.nl/shared/genes/CD247"/>
    <text>CD247 mutation db</text>
</comment>